<keyword id="KW-0007">Acetylation</keyword>
<keyword id="KW-0520">NAD</keyword>
<keyword id="KW-0560">Oxidoreductase</keyword>
<keyword id="KW-1185">Reference proteome</keyword>
<name>ALDH_MYCTU</name>
<comment type="catalytic activity">
    <reaction>
        <text>an aldehyde + NAD(+) + H2O = a carboxylate + NADH + 2 H(+)</text>
        <dbReference type="Rhea" id="RHEA:16185"/>
        <dbReference type="ChEBI" id="CHEBI:15377"/>
        <dbReference type="ChEBI" id="CHEBI:15378"/>
        <dbReference type="ChEBI" id="CHEBI:17478"/>
        <dbReference type="ChEBI" id="CHEBI:29067"/>
        <dbReference type="ChEBI" id="CHEBI:57540"/>
        <dbReference type="ChEBI" id="CHEBI:57945"/>
        <dbReference type="EC" id="1.2.1.3"/>
    </reaction>
</comment>
<comment type="similarity">
    <text evidence="2">Belongs to the aldehyde dehydrogenase family.</text>
</comment>
<accession>P9WNY1</accession>
<accession>L0T3T1</accession>
<accession>O53743</accession>
<accession>P63937</accession>
<sequence>MTVFSRPGSAGALMSYESRYQNFIGGQWVAPVHGRYFENPTPVTGQPFCEVPRSDAADIDKALDAAHAAAPGWGKTAPAERAAILNMIADRIDKNAAALAVAEVWDNGKPVREALAADIPLAVDHFRYFAAAIRAQEGALSQIDEDTVAYHFHEPLGVVGQIIPWNFPILMAAWKLAPALAAGNTAVLKPAEQTPASVLYLMSLIGDLLPPGVVNVVNGFGAEAGKPLASSDRIAKVAFTGETTTGRLIMQYASHNLIPVTLELGGKSPNIFFADVLAAHDDFCDKALEGFTMFALNQGEVCTCPSRSLIQADIYDEFLELAAIRTKAVRQGDPLDTETMLGSQASNDQLEKVLSYIEIGKQEGAVIIAGGERAELGGDLSGGYYMQPTIFTGTNNMRIFKEEIFGPVVAVTSFTDYDDAIGIANDTLYGLGAGVWSRDGNTAYRAGRDIQAGRVWVNCYHLYPAHAAFGGYKQSGIGREGHQMMLQHYQHTKNLLVSYSDKALGFF</sequence>
<proteinExistence type="evidence at protein level"/>
<protein>
    <recommendedName>
        <fullName>Probable aldehyde dehydrogenase</fullName>
        <ecNumber>1.2.1.3</ecNumber>
    </recommendedName>
</protein>
<reference key="1">
    <citation type="journal article" date="1998" name="Nature">
        <title>Deciphering the biology of Mycobacterium tuberculosis from the complete genome sequence.</title>
        <authorList>
            <person name="Cole S.T."/>
            <person name="Brosch R."/>
            <person name="Parkhill J."/>
            <person name="Garnier T."/>
            <person name="Churcher C.M."/>
            <person name="Harris D.E."/>
            <person name="Gordon S.V."/>
            <person name="Eiglmeier K."/>
            <person name="Gas S."/>
            <person name="Barry C.E. III"/>
            <person name="Tekaia F."/>
            <person name="Badcock K."/>
            <person name="Basham D."/>
            <person name="Brown D."/>
            <person name="Chillingworth T."/>
            <person name="Connor R."/>
            <person name="Davies R.M."/>
            <person name="Devlin K."/>
            <person name="Feltwell T."/>
            <person name="Gentles S."/>
            <person name="Hamlin N."/>
            <person name="Holroyd S."/>
            <person name="Hornsby T."/>
            <person name="Jagels K."/>
            <person name="Krogh A."/>
            <person name="McLean J."/>
            <person name="Moule S."/>
            <person name="Murphy L.D."/>
            <person name="Oliver S."/>
            <person name="Osborne J."/>
            <person name="Quail M.A."/>
            <person name="Rajandream M.A."/>
            <person name="Rogers J."/>
            <person name="Rutter S."/>
            <person name="Seeger K."/>
            <person name="Skelton S."/>
            <person name="Squares S."/>
            <person name="Squares R."/>
            <person name="Sulston J.E."/>
            <person name="Taylor K."/>
            <person name="Whitehead S."/>
            <person name="Barrell B.G."/>
        </authorList>
    </citation>
    <scope>NUCLEOTIDE SEQUENCE [LARGE SCALE GENOMIC DNA]</scope>
    <source>
        <strain>ATCC 25618 / H37Rv</strain>
    </source>
</reference>
<reference key="2">
    <citation type="journal article" date="2011" name="Mol. Cell. Proteomics">
        <title>Proteogenomic analysis of Mycobacterium tuberculosis by high resolution mass spectrometry.</title>
        <authorList>
            <person name="Kelkar D.S."/>
            <person name="Kumar D."/>
            <person name="Kumar P."/>
            <person name="Balakrishnan L."/>
            <person name="Muthusamy B."/>
            <person name="Yadav A.K."/>
            <person name="Shrivastava P."/>
            <person name="Marimuthu A."/>
            <person name="Anand S."/>
            <person name="Sundaram H."/>
            <person name="Kingsbury R."/>
            <person name="Harsha H.C."/>
            <person name="Nair B."/>
            <person name="Prasad T.S."/>
            <person name="Chauhan D.S."/>
            <person name="Katoch K."/>
            <person name="Katoch V.M."/>
            <person name="Kumar P."/>
            <person name="Chaerkady R."/>
            <person name="Ramachandran S."/>
            <person name="Dash D."/>
            <person name="Pandey A."/>
        </authorList>
    </citation>
    <scope>ACETYLATION [LARGE SCALE ANALYSIS] AT THR-2</scope>
    <scope>CLEAVAGE OF INITIATOR METHIONINE [LARGE SCALE ANALYSIS]</scope>
    <scope>IDENTIFICATION BY MASS SPECTROMETRY [LARGE SCALE ANALYSIS]</scope>
    <source>
        <strain>ATCC 25618 / H37Rv</strain>
    </source>
</reference>
<dbReference type="EC" id="1.2.1.3"/>
<dbReference type="EMBL" id="AL123456">
    <property type="protein sequence ID" value="CCP43191.1"/>
    <property type="molecule type" value="Genomic_DNA"/>
</dbReference>
<dbReference type="PIR" id="F70827">
    <property type="entry name" value="F70827"/>
</dbReference>
<dbReference type="RefSeq" id="NP_214972.1">
    <property type="nucleotide sequence ID" value="NC_000962.3"/>
</dbReference>
<dbReference type="RefSeq" id="WP_003402294.1">
    <property type="nucleotide sequence ID" value="NZ_NVQJ01000002.1"/>
</dbReference>
<dbReference type="SMR" id="P9WNY1"/>
<dbReference type="FunCoup" id="P9WNY1">
    <property type="interactions" value="290"/>
</dbReference>
<dbReference type="STRING" id="83332.Rv0458"/>
<dbReference type="iPTMnet" id="P9WNY1"/>
<dbReference type="PaxDb" id="83332-Rv0458"/>
<dbReference type="DNASU" id="886306"/>
<dbReference type="GeneID" id="886306"/>
<dbReference type="KEGG" id="mtu:Rv0458"/>
<dbReference type="KEGG" id="mtv:RVBD_0458"/>
<dbReference type="TubercuList" id="Rv0458"/>
<dbReference type="eggNOG" id="COG1012">
    <property type="taxonomic scope" value="Bacteria"/>
</dbReference>
<dbReference type="InParanoid" id="P9WNY1"/>
<dbReference type="OrthoDB" id="6882680at2"/>
<dbReference type="PhylomeDB" id="P9WNY1"/>
<dbReference type="Proteomes" id="UP000001584">
    <property type="component" value="Chromosome"/>
</dbReference>
<dbReference type="GO" id="GO:0005886">
    <property type="term" value="C:plasma membrane"/>
    <property type="evidence" value="ECO:0007005"/>
    <property type="project" value="MTBBASE"/>
</dbReference>
<dbReference type="GO" id="GO:0004029">
    <property type="term" value="F:aldehyde dehydrogenase (NAD+) activity"/>
    <property type="evidence" value="ECO:0007669"/>
    <property type="project" value="UniProtKB-EC"/>
</dbReference>
<dbReference type="GO" id="GO:0052167">
    <property type="term" value="P:symbiont-mediated perturbation of host innate immune response"/>
    <property type="evidence" value="ECO:0000314"/>
    <property type="project" value="MTBBASE"/>
</dbReference>
<dbReference type="CDD" id="cd07116">
    <property type="entry name" value="ALDH_ACDHII-AcoD"/>
    <property type="match status" value="1"/>
</dbReference>
<dbReference type="FunFam" id="3.40.605.10:FF:000001">
    <property type="entry name" value="Aldehyde dehydrogenase 1"/>
    <property type="match status" value="1"/>
</dbReference>
<dbReference type="FunFam" id="3.40.309.10:FF:000017">
    <property type="entry name" value="Aldehyde dehydrogenase B"/>
    <property type="match status" value="1"/>
</dbReference>
<dbReference type="Gene3D" id="3.40.605.10">
    <property type="entry name" value="Aldehyde Dehydrogenase, Chain A, domain 1"/>
    <property type="match status" value="1"/>
</dbReference>
<dbReference type="Gene3D" id="3.40.309.10">
    <property type="entry name" value="Aldehyde Dehydrogenase, Chain A, domain 2"/>
    <property type="match status" value="1"/>
</dbReference>
<dbReference type="InterPro" id="IPR016161">
    <property type="entry name" value="Ald_DH/histidinol_DH"/>
</dbReference>
<dbReference type="InterPro" id="IPR016163">
    <property type="entry name" value="Ald_DH_C"/>
</dbReference>
<dbReference type="InterPro" id="IPR016160">
    <property type="entry name" value="Ald_DH_CS_CYS"/>
</dbReference>
<dbReference type="InterPro" id="IPR029510">
    <property type="entry name" value="Ald_DH_CS_GLU"/>
</dbReference>
<dbReference type="InterPro" id="IPR016162">
    <property type="entry name" value="Ald_DH_N"/>
</dbReference>
<dbReference type="InterPro" id="IPR015590">
    <property type="entry name" value="Aldehyde_DH_dom"/>
</dbReference>
<dbReference type="PANTHER" id="PTHR43111">
    <property type="entry name" value="ALDEHYDE DEHYDROGENASE B-RELATED"/>
    <property type="match status" value="1"/>
</dbReference>
<dbReference type="PANTHER" id="PTHR43111:SF1">
    <property type="entry name" value="ALDEHYDE DEHYDROGENASE B-RELATED"/>
    <property type="match status" value="1"/>
</dbReference>
<dbReference type="Pfam" id="PF00171">
    <property type="entry name" value="Aldedh"/>
    <property type="match status" value="1"/>
</dbReference>
<dbReference type="SUPFAM" id="SSF53720">
    <property type="entry name" value="ALDH-like"/>
    <property type="match status" value="1"/>
</dbReference>
<dbReference type="PROSITE" id="PS00070">
    <property type="entry name" value="ALDEHYDE_DEHYDR_CYS"/>
    <property type="match status" value="1"/>
</dbReference>
<dbReference type="PROSITE" id="PS00687">
    <property type="entry name" value="ALDEHYDE_DEHYDR_GLU"/>
    <property type="match status" value="1"/>
</dbReference>
<evidence type="ECO:0000250" key="1"/>
<evidence type="ECO:0000305" key="2"/>
<evidence type="ECO:0007744" key="3">
    <source>
    </source>
</evidence>
<gene>
    <name type="ordered locus">Rv0458</name>
    <name type="ORF">MTV038.02</name>
</gene>
<feature type="initiator methionine" description="Removed" evidence="3">
    <location>
        <position position="1"/>
    </location>
</feature>
<feature type="chain" id="PRO_0000056449" description="Probable aldehyde dehydrogenase">
    <location>
        <begin position="2"/>
        <end position="507"/>
    </location>
</feature>
<feature type="active site" evidence="1">
    <location>
        <position position="263"/>
    </location>
</feature>
<feature type="active site" evidence="1">
    <location>
        <position position="302"/>
    </location>
</feature>
<feature type="binding site" evidence="1">
    <location>
        <begin position="219"/>
        <end position="225"/>
    </location>
    <ligand>
        <name>NAD(+)</name>
        <dbReference type="ChEBI" id="CHEBI:57540"/>
    </ligand>
</feature>
<feature type="modified residue" description="N-acetylthreonine" evidence="3">
    <location>
        <position position="2"/>
    </location>
</feature>
<organism>
    <name type="scientific">Mycobacterium tuberculosis (strain ATCC 25618 / H37Rv)</name>
    <dbReference type="NCBI Taxonomy" id="83332"/>
    <lineage>
        <taxon>Bacteria</taxon>
        <taxon>Bacillati</taxon>
        <taxon>Actinomycetota</taxon>
        <taxon>Actinomycetes</taxon>
        <taxon>Mycobacteriales</taxon>
        <taxon>Mycobacteriaceae</taxon>
        <taxon>Mycobacterium</taxon>
        <taxon>Mycobacterium tuberculosis complex</taxon>
    </lineage>
</organism>